<protein>
    <recommendedName>
        <fullName evidence="2">DNA integrity scanning protein DisA</fullName>
    </recommendedName>
    <alternativeName>
        <fullName evidence="2">Cyclic di-AMP synthase</fullName>
        <shortName evidence="2">c-di-AMP synthase</shortName>
    </alternativeName>
    <alternativeName>
        <fullName>DNA integrity scanning protein A</fullName>
    </alternativeName>
    <alternativeName>
        <fullName evidence="2">Diadenylate cyclase</fullName>
        <shortName>DAC</shortName>
        <ecNumber evidence="2 6 13">2.7.7.85</ecNumber>
    </alternativeName>
</protein>
<gene>
    <name evidence="2" type="primary">disA</name>
    <name evidence="15" type="synonym">comY</name>
    <name evidence="15" type="synonym">orf6</name>
    <name type="synonym">yacK</name>
    <name type="ordered locus">BSU00880</name>
</gene>
<name>DISA_BACSU</name>
<reference key="1">
    <citation type="journal article" date="1994" name="DNA Res.">
        <title>Systematic sequencing of the 180 kilobase region of the Bacillus subtilis chromosome containing the replication origin.</title>
        <authorList>
            <person name="Ogasawara N."/>
            <person name="Nakai S."/>
            <person name="Yoshikawa H."/>
        </authorList>
    </citation>
    <scope>NUCLEOTIDE SEQUENCE [GENOMIC DNA]</scope>
    <source>
        <strain>168</strain>
    </source>
</reference>
<reference key="2">
    <citation type="journal article" date="1997" name="Nature">
        <title>The complete genome sequence of the Gram-positive bacterium Bacillus subtilis.</title>
        <authorList>
            <person name="Kunst F."/>
            <person name="Ogasawara N."/>
            <person name="Moszer I."/>
            <person name="Albertini A.M."/>
            <person name="Alloni G."/>
            <person name="Azevedo V."/>
            <person name="Bertero M.G."/>
            <person name="Bessieres P."/>
            <person name="Bolotin A."/>
            <person name="Borchert S."/>
            <person name="Borriss R."/>
            <person name="Boursier L."/>
            <person name="Brans A."/>
            <person name="Braun M."/>
            <person name="Brignell S.C."/>
            <person name="Bron S."/>
            <person name="Brouillet S."/>
            <person name="Bruschi C.V."/>
            <person name="Caldwell B."/>
            <person name="Capuano V."/>
            <person name="Carter N.M."/>
            <person name="Choi S.-K."/>
            <person name="Codani J.-J."/>
            <person name="Connerton I.F."/>
            <person name="Cummings N.J."/>
            <person name="Daniel R.A."/>
            <person name="Denizot F."/>
            <person name="Devine K.M."/>
            <person name="Duesterhoeft A."/>
            <person name="Ehrlich S.D."/>
            <person name="Emmerson P.T."/>
            <person name="Entian K.-D."/>
            <person name="Errington J."/>
            <person name="Fabret C."/>
            <person name="Ferrari E."/>
            <person name="Foulger D."/>
            <person name="Fritz C."/>
            <person name="Fujita M."/>
            <person name="Fujita Y."/>
            <person name="Fuma S."/>
            <person name="Galizzi A."/>
            <person name="Galleron N."/>
            <person name="Ghim S.-Y."/>
            <person name="Glaser P."/>
            <person name="Goffeau A."/>
            <person name="Golightly E.J."/>
            <person name="Grandi G."/>
            <person name="Guiseppi G."/>
            <person name="Guy B.J."/>
            <person name="Haga K."/>
            <person name="Haiech J."/>
            <person name="Harwood C.R."/>
            <person name="Henaut A."/>
            <person name="Hilbert H."/>
            <person name="Holsappel S."/>
            <person name="Hosono S."/>
            <person name="Hullo M.-F."/>
            <person name="Itaya M."/>
            <person name="Jones L.-M."/>
            <person name="Joris B."/>
            <person name="Karamata D."/>
            <person name="Kasahara Y."/>
            <person name="Klaerr-Blanchard M."/>
            <person name="Klein C."/>
            <person name="Kobayashi Y."/>
            <person name="Koetter P."/>
            <person name="Koningstein G."/>
            <person name="Krogh S."/>
            <person name="Kumano M."/>
            <person name="Kurita K."/>
            <person name="Lapidus A."/>
            <person name="Lardinois S."/>
            <person name="Lauber J."/>
            <person name="Lazarevic V."/>
            <person name="Lee S.-M."/>
            <person name="Levine A."/>
            <person name="Liu H."/>
            <person name="Masuda S."/>
            <person name="Mauel C."/>
            <person name="Medigue C."/>
            <person name="Medina N."/>
            <person name="Mellado R.P."/>
            <person name="Mizuno M."/>
            <person name="Moestl D."/>
            <person name="Nakai S."/>
            <person name="Noback M."/>
            <person name="Noone D."/>
            <person name="O'Reilly M."/>
            <person name="Ogawa K."/>
            <person name="Ogiwara A."/>
            <person name="Oudega B."/>
            <person name="Park S.-H."/>
            <person name="Parro V."/>
            <person name="Pohl T.M."/>
            <person name="Portetelle D."/>
            <person name="Porwollik S."/>
            <person name="Prescott A.M."/>
            <person name="Presecan E."/>
            <person name="Pujic P."/>
            <person name="Purnelle B."/>
            <person name="Rapoport G."/>
            <person name="Rey M."/>
            <person name="Reynolds S."/>
            <person name="Rieger M."/>
            <person name="Rivolta C."/>
            <person name="Rocha E."/>
            <person name="Roche B."/>
            <person name="Rose M."/>
            <person name="Sadaie Y."/>
            <person name="Sato T."/>
            <person name="Scanlan E."/>
            <person name="Schleich S."/>
            <person name="Schroeter R."/>
            <person name="Scoffone F."/>
            <person name="Sekiguchi J."/>
            <person name="Sekowska A."/>
            <person name="Seror S.J."/>
            <person name="Serror P."/>
            <person name="Shin B.-S."/>
            <person name="Soldo B."/>
            <person name="Sorokin A."/>
            <person name="Tacconi E."/>
            <person name="Takagi T."/>
            <person name="Takahashi H."/>
            <person name="Takemaru K."/>
            <person name="Takeuchi M."/>
            <person name="Tamakoshi A."/>
            <person name="Tanaka T."/>
            <person name="Terpstra P."/>
            <person name="Tognoni A."/>
            <person name="Tosato V."/>
            <person name="Uchiyama S."/>
            <person name="Vandenbol M."/>
            <person name="Vannier F."/>
            <person name="Vassarotti A."/>
            <person name="Viari A."/>
            <person name="Wambutt R."/>
            <person name="Wedler E."/>
            <person name="Wedler H."/>
            <person name="Weitzenegger T."/>
            <person name="Winters P."/>
            <person name="Wipat A."/>
            <person name="Yamamoto H."/>
            <person name="Yamane K."/>
            <person name="Yasumoto K."/>
            <person name="Yata K."/>
            <person name="Yoshida K."/>
            <person name="Yoshikawa H.-F."/>
            <person name="Zumstein E."/>
            <person name="Yoshikawa H."/>
            <person name="Danchin A."/>
        </authorList>
    </citation>
    <scope>NUCLEOTIDE SEQUENCE [LARGE SCALE GENOMIC DNA]</scope>
    <source>
        <strain>168</strain>
    </source>
</reference>
<reference key="3">
    <citation type="journal article" date="1997" name="Microbiology">
        <title>The Bacillus subtilis clpC operon encodes DNA repair and competence proteins.</title>
        <authorList>
            <person name="Krueger E."/>
            <person name="Msadek T."/>
            <person name="Ohlmeier S."/>
            <person name="Hecker M."/>
        </authorList>
    </citation>
    <scope>FUNCTION</scope>
    <scope>DISRUPTION PHENOTYPE</scope>
    <source>
        <strain>168 / IS58</strain>
    </source>
</reference>
<reference key="4">
    <citation type="journal article" date="2006" name="Cell">
        <title>A checkpoint protein that scans the chromosome for damage at the start of sporulation in Bacillus subtilis.</title>
        <authorList>
            <person name="Bejerano-Sagie M."/>
            <person name="Oppenheimer-Shaanan Y."/>
            <person name="Berlatzky I."/>
            <person name="Rouvinski A."/>
            <person name="Meyerovich M."/>
            <person name="Ben-Yehuda S."/>
        </authorList>
    </citation>
    <scope>FUNCTION</scope>
    <scope>INDUCTION</scope>
    <source>
        <strain>168 / PY79</strain>
    </source>
</reference>
<reference key="5">
    <citation type="journal article" date="2007" name="J. Bacteriol.">
        <title>SigM-responsive genes of Bacillus subtilis and their promoters.</title>
        <authorList>
            <person name="Jervis A.J."/>
            <person name="Thackray P.D."/>
            <person name="Houston C.W."/>
            <person name="Horsburgh M.J."/>
            <person name="Moir A."/>
        </authorList>
    </citation>
    <scope>INDUCTION</scope>
    <source>
        <strain>168 / 1604</strain>
    </source>
</reference>
<reference key="6">
    <citation type="journal article" date="2008" name="Mol. Cell">
        <title>Structural biochemistry of a bacterial checkpoint protein reveals diadenylate cyclase activity regulated by DNA recombination intermediates.</title>
        <authorList>
            <person name="Witte G."/>
            <person name="Hartung S."/>
            <person name="Buttner K."/>
            <person name="Hopfner K.P."/>
        </authorList>
    </citation>
    <scope>FUNCTION</scope>
    <scope>CATALYTIC ACTIVITY</scope>
    <scope>COFACTOR</scope>
    <scope>SUBSTRATE SPECIFICITY</scope>
    <scope>ACTIVITY REGULATION</scope>
    <scope>DNA-BINDING</scope>
    <scope>SUBUNIT</scope>
    <scope>MUTAGENESIS OF ASP-77 AND GLY-334</scope>
</reference>
<reference key="7">
    <citation type="journal article" date="2011" name="EMBO Rep.">
        <title>c-di-AMP reports DNA integrity during sporulation in Bacillus subtilis.</title>
        <authorList>
            <person name="Oppenheimer-Shaanan Y."/>
            <person name="Wexselblatt E."/>
            <person name="Katzhendler J."/>
            <person name="Yavin E."/>
            <person name="Ben-Yehuda S."/>
        </authorList>
    </citation>
    <scope>FUNCTION</scope>
    <scope>SUBCELLULAR LOCATION</scope>
    <scope>DISRUPTION PHENOTYPE</scope>
    <scope>MUTAGENESIS OF ASP-77</scope>
    <source>
        <strain>168 / PY79</strain>
    </source>
</reference>
<reference key="8">
    <citation type="journal article" date="2012" name="Mol. Microbiol.">
        <title>Analysis of the role of Bacillus subtilis sigma(M) in beta-lactam resistance reveals an essential role for c-di-AMP in peptidoglycan homeostasis.</title>
        <authorList>
            <person name="Luo Y."/>
            <person name="Helmann J.D."/>
        </authorList>
    </citation>
    <scope>FUNCTION</scope>
    <scope>DISRUPTION PHENOTYPE</scope>
    <source>
        <strain>168</strain>
    </source>
</reference>
<reference key="9">
    <citation type="journal article" date="2013" name="J. Biol. Chem.">
        <title>Cyclic di-AMP homeostasis in Bacillus subtilis: both lack and high level accumulation of the nucleotide are detrimental for cell growth.</title>
        <authorList>
            <person name="Mehne F.M."/>
            <person name="Gunka K."/>
            <person name="Eilers H."/>
            <person name="Herzberg C."/>
            <person name="Kaever V."/>
            <person name="Stuelke J."/>
        </authorList>
    </citation>
    <scope>FUNCTION</scope>
    <scope>DISRUPTION PHENOTYPE</scope>
    <source>
        <strain>168</strain>
    </source>
</reference>
<reference key="10">
    <citation type="journal article" date="2013" name="J. Biol. Chem.">
        <title>Radiation-sensitive gene A (RadA) targets DisA, DNA integrity scanning protein A, to negatively affect cyclic di-AMP synthesis activity in Mycobacterium smegmatis.</title>
        <authorList>
            <person name="Zhang L."/>
            <person name="He Z.G."/>
        </authorList>
    </citation>
    <scope>INTERACTION WITH RADA</scope>
</reference>
<reference key="11">
    <citation type="journal article" date="2015" name="DNA Repair">
        <title>DisA and c-di-AMP act at the intersection between DNA-damage response and stress homeostasis in exponentially growing Bacillus subtilis cells.</title>
        <authorList>
            <person name="Gandara C."/>
            <person name="Alonso J.C."/>
        </authorList>
    </citation>
    <scope>FUNCTION</scope>
    <scope>DISRUPTION PHENOTYPE</scope>
    <scope>MUTAGENESIS OF ASP-77</scope>
    <source>
        <strain>168</strain>
        <strain>168 / PY79</strain>
        <strain>168 / YB886 / BG214</strain>
    </source>
</reference>
<reference key="12">
    <citation type="journal article" date="2015" name="J. Bacteriol.">
        <title>An essential poison: synthesis and degradation of cyclic di-AMP in Bacillus subtilis.</title>
        <authorList>
            <person name="Gundlach J."/>
            <person name="Mehne F.M."/>
            <person name="Herzberg C."/>
            <person name="Kampf J."/>
            <person name="Valerius O."/>
            <person name="Kaever V."/>
            <person name="Stuelke J."/>
        </authorList>
    </citation>
    <scope>FUNCTION</scope>
    <source>
        <strain>168</strain>
    </source>
</reference>
<reference key="13">
    <citation type="journal article" date="2021" name="Cells">
        <title>DisA Limits RecG Activities at Stalled or Reversed Replication Forks.</title>
        <authorList>
            <person name="Torres R."/>
            <person name="Gandara C."/>
            <person name="Carrasco B."/>
            <person name="Baquedano I."/>
            <person name="Ayora S."/>
            <person name="Alonso J.C."/>
        </authorList>
    </citation>
    <scope>FUNCTION</scope>
    <scope>CATALYTIC ACTIVITY</scope>
    <scope>ACTIVITY REGULATION</scope>
    <scope>BIOPHYSICOCHEMICAL PROPERTIES</scope>
    <scope>DOMAIN</scope>
    <scope>DNA-BINDING</scope>
    <scope>MUTAGENESIS OF ASP-77</scope>
</reference>
<proteinExistence type="evidence at protein level"/>
<dbReference type="EC" id="2.7.7.85" evidence="2 6 13"/>
<dbReference type="EMBL" id="D26185">
    <property type="protein sequence ID" value="BAA05322.1"/>
    <property type="molecule type" value="Genomic_DNA"/>
</dbReference>
<dbReference type="EMBL" id="AL009126">
    <property type="protein sequence ID" value="CAB11864.1"/>
    <property type="molecule type" value="Genomic_DNA"/>
</dbReference>
<dbReference type="PIR" id="S66117">
    <property type="entry name" value="S66117"/>
</dbReference>
<dbReference type="RefSeq" id="NP_387969.1">
    <property type="nucleotide sequence ID" value="NC_000964.3"/>
</dbReference>
<dbReference type="RefSeq" id="WP_003225736.1">
    <property type="nucleotide sequence ID" value="NZ_OZ025638.1"/>
</dbReference>
<dbReference type="SMR" id="P37573"/>
<dbReference type="FunCoup" id="P37573">
    <property type="interactions" value="20"/>
</dbReference>
<dbReference type="STRING" id="224308.BSU00880"/>
<dbReference type="PaxDb" id="224308-BSU00880"/>
<dbReference type="EnsemblBacteria" id="CAB11864">
    <property type="protein sequence ID" value="CAB11864"/>
    <property type="gene ID" value="BSU_00880"/>
</dbReference>
<dbReference type="GeneID" id="936868"/>
<dbReference type="KEGG" id="bsu:BSU00880"/>
<dbReference type="PATRIC" id="fig|224308.179.peg.89"/>
<dbReference type="eggNOG" id="COG1623">
    <property type="taxonomic scope" value="Bacteria"/>
</dbReference>
<dbReference type="InParanoid" id="P37573"/>
<dbReference type="OrthoDB" id="41841at2"/>
<dbReference type="PhylomeDB" id="P37573"/>
<dbReference type="BioCyc" id="BSUB:BSU00880-MONOMER"/>
<dbReference type="BioCyc" id="MetaCyc:BSU00880-MONOMER"/>
<dbReference type="BRENDA" id="2.7.7.85">
    <property type="organism ID" value="658"/>
</dbReference>
<dbReference type="Proteomes" id="UP000001570">
    <property type="component" value="Chromosome"/>
</dbReference>
<dbReference type="GO" id="GO:0005737">
    <property type="term" value="C:cytoplasm"/>
    <property type="evidence" value="ECO:0007669"/>
    <property type="project" value="UniProtKB-SubCell"/>
</dbReference>
<dbReference type="GO" id="GO:0004016">
    <property type="term" value="F:adenylate cyclase activity"/>
    <property type="evidence" value="ECO:0000318"/>
    <property type="project" value="GO_Central"/>
</dbReference>
<dbReference type="GO" id="GO:0005524">
    <property type="term" value="F:ATP binding"/>
    <property type="evidence" value="ECO:0007669"/>
    <property type="project" value="UniProtKB-UniRule"/>
</dbReference>
<dbReference type="GO" id="GO:0106408">
    <property type="term" value="F:diadenylate cyclase activity"/>
    <property type="evidence" value="ECO:0000314"/>
    <property type="project" value="UniProtKB"/>
</dbReference>
<dbReference type="GO" id="GO:0000400">
    <property type="term" value="F:four-way junction DNA binding"/>
    <property type="evidence" value="ECO:0000314"/>
    <property type="project" value="UniProtKB"/>
</dbReference>
<dbReference type="GO" id="GO:0006281">
    <property type="term" value="P:DNA repair"/>
    <property type="evidence" value="ECO:0007669"/>
    <property type="project" value="UniProtKB-UniRule"/>
</dbReference>
<dbReference type="FunFam" id="1.10.150.20:FF:000023">
    <property type="entry name" value="DNA integrity scanning protein DisA"/>
    <property type="match status" value="1"/>
</dbReference>
<dbReference type="FunFam" id="3.40.1700.10:FF:000001">
    <property type="entry name" value="DNA integrity scanning protein DisA"/>
    <property type="match status" value="1"/>
</dbReference>
<dbReference type="Gene3D" id="1.10.150.20">
    <property type="entry name" value="5' to 3' exonuclease, C-terminal subdomain"/>
    <property type="match status" value="1"/>
</dbReference>
<dbReference type="Gene3D" id="1.20.1260.110">
    <property type="entry name" value="DNA integrity scanning linker region"/>
    <property type="match status" value="1"/>
</dbReference>
<dbReference type="Gene3D" id="3.40.1700.10">
    <property type="entry name" value="DNA integrity scanning protein, DisA, N-terminal domain"/>
    <property type="match status" value="1"/>
</dbReference>
<dbReference type="HAMAP" id="MF_01438">
    <property type="entry name" value="DisA"/>
    <property type="match status" value="1"/>
</dbReference>
<dbReference type="InterPro" id="IPR050338">
    <property type="entry name" value="DisA"/>
</dbReference>
<dbReference type="InterPro" id="IPR038331">
    <property type="entry name" value="DisA_sf"/>
</dbReference>
<dbReference type="InterPro" id="IPR036888">
    <property type="entry name" value="DNA_integrity_DisA_N_sf"/>
</dbReference>
<dbReference type="InterPro" id="IPR018906">
    <property type="entry name" value="DNA_integrity_scan_DisA_link"/>
</dbReference>
<dbReference type="InterPro" id="IPR003390">
    <property type="entry name" value="DNA_integrity_scan_DisA_N"/>
</dbReference>
<dbReference type="InterPro" id="IPR023763">
    <property type="entry name" value="DNA_integrity_scanning_protein"/>
</dbReference>
<dbReference type="InterPro" id="IPR010994">
    <property type="entry name" value="RuvA_2-like"/>
</dbReference>
<dbReference type="NCBIfam" id="NF010009">
    <property type="entry name" value="PRK13482.1"/>
    <property type="match status" value="1"/>
</dbReference>
<dbReference type="PANTHER" id="PTHR34185">
    <property type="entry name" value="DIADENYLATE CYCLASE"/>
    <property type="match status" value="1"/>
</dbReference>
<dbReference type="PANTHER" id="PTHR34185:SF3">
    <property type="entry name" value="DNA INTEGRITY SCANNING PROTEIN DISA"/>
    <property type="match status" value="1"/>
</dbReference>
<dbReference type="Pfam" id="PF02457">
    <property type="entry name" value="DAC"/>
    <property type="match status" value="1"/>
</dbReference>
<dbReference type="Pfam" id="PF10635">
    <property type="entry name" value="DisA-linker"/>
    <property type="match status" value="1"/>
</dbReference>
<dbReference type="SUPFAM" id="SSF47781">
    <property type="entry name" value="RuvA domain 2-like"/>
    <property type="match status" value="1"/>
</dbReference>
<dbReference type="SUPFAM" id="SSF143597">
    <property type="entry name" value="YojJ-like"/>
    <property type="match status" value="1"/>
</dbReference>
<dbReference type="PROSITE" id="PS51794">
    <property type="entry name" value="DAC"/>
    <property type="match status" value="1"/>
</dbReference>
<comment type="function">
    <text evidence="4 7 8 12 13 14 16">Participates in a DNA-damage check-point that is active prior to asymmetric division when DNA is damaged (PubMed:16713562, PubMed:9141693). Forms globular foci that rapidly scan along the chromosomes during sporulation, searching for lesions. Its ability to scan through the chromosome rapidly is due to its non-specific DNA-binding. When a lesion is present, DisA pauses at the lesion site (PubMed:21566650). This triggers a cellular response that culminates in a temporary block in sporulation initiation. It is required, at least partially, to inhibit the activity of the transcription factor spo0A, which controls, among others, early sporulation genes. In B.subtilis c-di-AMP is a second messenger that mediates growth, DNA repair and cell wall homeostasis (PubMed:22211522); it is toxic when present in excess (PubMed:26240071). Limits the replication fork reggression activity of RecG; DisA inhibits the ATPase activity of RecG (PubMed:34073022). By limiting RecG-mediated fork regression, DisA provides time for removal of potentially lethal DNA lesions (Probable) (PubMed:34073022).</text>
</comment>
<comment type="function">
    <text evidence="6 9 11">One of 3 paralogous diadenylate cyclases (DAC) in this bacteria (PubMed:23192352). Has diadenylate cyclase activity, catalyzing the condensation of 2 ATP molecules into cyclic di-AMP (c-di-AMP) (PubMed:18439896, PubMed:25616256). c-di-AMP acts as a signaling molecule that couples DNA integrity with progression of sporulation. The rise in c-di-AMP level generated by DisA while scanning the chromosome operates as a positive signal that advances sporulation; upon encountering a lesion, the DisA focus arrests at the damaged site and halts c-di-AMP synthesis. Does not convert GTP to c-di-GMP (PubMed:18439896).</text>
</comment>
<comment type="catalytic activity">
    <reaction evidence="2 6 13">
        <text>2 ATP = 3',3'-c-di-AMP + 2 diphosphate</text>
        <dbReference type="Rhea" id="RHEA:35655"/>
        <dbReference type="ChEBI" id="CHEBI:30616"/>
        <dbReference type="ChEBI" id="CHEBI:33019"/>
        <dbReference type="ChEBI" id="CHEBI:71500"/>
        <dbReference type="EC" id="2.7.7.85"/>
    </reaction>
</comment>
<comment type="cofactor">
    <cofactor evidence="2 6">
        <name>Mg(2+)</name>
        <dbReference type="ChEBI" id="CHEBI:18420"/>
    </cofactor>
</comment>
<comment type="activity regulation">
    <text evidence="1 6 13">Diadenylate cyclase (DAC) activity is inhibited 2-fold by Holliday junction (HJ) DNA, further addition of RecG inhibits DAC activity 11-fold; RecG may relocate DisA from the HJ (PubMed:34073022). DAC is inhibited by the interaction with RadA (By similarity). Diadenylate cyclase activity is not affected by ssDNA or dsDNA, but three- and four-way junctions strongly inhibit the activity of DisA, suggesting the enzyme is regulated by branched nucleic acids (PubMed:18439896).</text>
</comment>
<comment type="biophysicochemical properties">
    <kinetics>
        <KM evidence="13">151 uM for ATP</KM>
        <text evidence="13">kcat is 0.84 sec(-1) (PubMed:34073022).</text>
    </kinetics>
</comment>
<comment type="subunit">
    <text evidence="6 10">Homooligomer (PubMed:18439896). Interacts with RadA (PubMed:23760274).</text>
</comment>
<comment type="subcellular location">
    <subcellularLocation>
        <location evidence="7">Cytoplasm</location>
    </subcellularLocation>
    <text evidence="7">Present in a puncate pattern at 1.5 hours after sporulation onset, does not co-localize with c-di-AMP phosphodiesterase GdpP.</text>
</comment>
<comment type="induction">
    <text evidence="4 5">Expression increases during late exponential phase and at the onset of sporulation (PubMed:16713562). Transcribed under partial control of SigM ECF sigma factor (PubMed:17434969).</text>
</comment>
<comment type="domain">
    <text evidence="13">The C-terminal domain (residues 290-360) is required for DNA binding and to inhibit the ATPase activity of RecG (PubMed:34073022).</text>
</comment>
<comment type="disruption phenotype">
    <text evidence="7 9 11 14">Decreases c-di-AMP levels in mid-exponential phase from about 3.8 uM to about 2.8 uM in strain BG214 (PubMed:25616256). No change in sensitivity to methyl methanesulfonate (MMS), decreased survival after UV irradiation in transition and stationary phase, strong decrease in competence (PubMed:9141693). Cells lacking this gene show a reduced c-di-AMP level compared to wild-type and cannot properly trigger the DNA damage response (PubMed:21566650). No effect on antibiotic sensitivity to the beta-lactam antibiotic cefuroxime (CEF), upon overexpression of the c-di-AMP phosphodiesterase GdpP increased sensitivity to CEF (PubMed:22211522). Double disA-cdaA mutants cannot be made, suggesting they are lethal, while double disA-cdaS and cdaA-cdaS mutants are viable (PubMed:22211522, PubMed:23192352). Depletion of cdaA in double disA-cdaA deletion cells leads to cell lysis (PubMed:22211522). Exponentially growing cells are 100-fold more sensitive to MMS, no change in response to H(2)O(2) or nalidixic acid; a double disA-radA deletion suppresses H(2)O(2) sensitivity of the radA mutant, but has no effect on MMS sensitivity, suggesting radA and disA might work in the same DNA repair pathway (PubMed:25616256).</text>
</comment>
<comment type="similarity">
    <text evidence="2">Belongs to the DisA family.</text>
</comment>
<keyword id="KW-0067">ATP-binding</keyword>
<keyword id="KW-0963">Cytoplasm</keyword>
<keyword id="KW-0227">DNA damage</keyword>
<keyword id="KW-0234">DNA repair</keyword>
<keyword id="KW-0238">DNA-binding</keyword>
<keyword id="KW-0460">Magnesium</keyword>
<keyword id="KW-0547">Nucleotide-binding</keyword>
<keyword id="KW-0548">Nucleotidyltransferase</keyword>
<keyword id="KW-1185">Reference proteome</keyword>
<keyword id="KW-0808">Transferase</keyword>
<sequence>MEKEKKGAKHELDLSSILQFVAPGTPLRAGMENVLRANTGGLIVVGYNDKVKEVVDGGFHINTAFSPAHLYELAKMDGAIILSDSGQKILYANTQLMPDATISSSETGMRHRTAERVAKQTGCLVIAISERRNVITLYQENMKYTLKDIGFILTKANQAIQTLEKYKTILDKTINALNALEFEELVTFSDVLSVMHRYEMVLRIKNEINMYIKELGTEGHLIKLQVIELITDMEEEAALFIKDYVKEKIKDPFVLLKELQDMSSYDLLDDSIVYKLLGYPASTNLDDYVLPRGYRLLNKIPRLPMPIVENVVEAFGVLPRIIEASAEELDEVEGIGEVRAQKIKKGLKRLQEKHYLDRQL</sequence>
<accession>P37573</accession>
<organism>
    <name type="scientific">Bacillus subtilis (strain 168)</name>
    <dbReference type="NCBI Taxonomy" id="224308"/>
    <lineage>
        <taxon>Bacteria</taxon>
        <taxon>Bacillati</taxon>
        <taxon>Bacillota</taxon>
        <taxon>Bacilli</taxon>
        <taxon>Bacillales</taxon>
        <taxon>Bacillaceae</taxon>
        <taxon>Bacillus</taxon>
    </lineage>
</organism>
<evidence type="ECO:0000250" key="1">
    <source>
        <dbReference type="UniProtKB" id="A0R564"/>
    </source>
</evidence>
<evidence type="ECO:0000255" key="2">
    <source>
        <dbReference type="HAMAP-Rule" id="MF_01438"/>
    </source>
</evidence>
<evidence type="ECO:0000255" key="3">
    <source>
        <dbReference type="PROSITE-ProRule" id="PRU01130"/>
    </source>
</evidence>
<evidence type="ECO:0000269" key="4">
    <source>
    </source>
</evidence>
<evidence type="ECO:0000269" key="5">
    <source>
    </source>
</evidence>
<evidence type="ECO:0000269" key="6">
    <source>
    </source>
</evidence>
<evidence type="ECO:0000269" key="7">
    <source>
    </source>
</evidence>
<evidence type="ECO:0000269" key="8">
    <source>
    </source>
</evidence>
<evidence type="ECO:0000269" key="9">
    <source>
    </source>
</evidence>
<evidence type="ECO:0000269" key="10">
    <source>
    </source>
</evidence>
<evidence type="ECO:0000269" key="11">
    <source>
    </source>
</evidence>
<evidence type="ECO:0000269" key="12">
    <source>
    </source>
</evidence>
<evidence type="ECO:0000269" key="13">
    <source>
    </source>
</evidence>
<evidence type="ECO:0000269" key="14">
    <source>
    </source>
</evidence>
<evidence type="ECO:0000303" key="15">
    <source>
    </source>
</evidence>
<evidence type="ECO:0000305" key="16">
    <source>
    </source>
</evidence>
<feature type="chain" id="PRO_0000049450" description="DNA integrity scanning protein DisA">
    <location>
        <begin position="1"/>
        <end position="360"/>
    </location>
</feature>
<feature type="domain" description="DAC" evidence="3">
    <location>
        <begin position="11"/>
        <end position="149"/>
    </location>
</feature>
<feature type="binding site" evidence="2">
    <location>
        <position position="78"/>
    </location>
    <ligand>
        <name>ATP</name>
        <dbReference type="ChEBI" id="CHEBI:30616"/>
    </ligand>
</feature>
<feature type="binding site" evidence="2">
    <location>
        <position position="96"/>
    </location>
    <ligand>
        <name>ATP</name>
        <dbReference type="ChEBI" id="CHEBI:30616"/>
    </ligand>
</feature>
<feature type="binding site" evidence="2">
    <location>
        <begin position="109"/>
        <end position="113"/>
    </location>
    <ligand>
        <name>ATP</name>
        <dbReference type="ChEBI" id="CHEBI:30616"/>
    </ligand>
</feature>
<feature type="mutagenesis site" description="Loss of enzymatic activity. Fails to form the normal DisA focus. Cannot trigger the DNA damage response. Increased sensitivity to methyl methanesulfonate. No change in inhibition of ATPase activity of RecG." evidence="6 7 11 13">
    <original>D</original>
    <variation>N</variation>
    <location>
        <position position="77"/>
    </location>
</feature>
<feature type="mutagenesis site" description="Reduction in the capability of the four-way junction DNA to inhibit diadenylate cyclase. Reduction in DNA-binding." evidence="6">
    <original>G</original>
    <variation>E</variation>
    <location>
        <position position="334"/>
    </location>
</feature>